<name>TRUA_SALAR</name>
<accession>A9MJ57</accession>
<gene>
    <name evidence="1" type="primary">truA</name>
    <name type="ordered locus">SARI_00531</name>
</gene>
<protein>
    <recommendedName>
        <fullName evidence="1">tRNA pseudouridine synthase A</fullName>
        <ecNumber evidence="1">5.4.99.12</ecNumber>
    </recommendedName>
    <alternativeName>
        <fullName evidence="1">tRNA pseudouridine(38-40) synthase</fullName>
    </alternativeName>
    <alternativeName>
        <fullName evidence="1">tRNA pseudouridylate synthase I</fullName>
    </alternativeName>
    <alternativeName>
        <fullName evidence="1">tRNA-uridine isomerase I</fullName>
    </alternativeName>
</protein>
<dbReference type="EC" id="5.4.99.12" evidence="1"/>
<dbReference type="EMBL" id="CP000880">
    <property type="protein sequence ID" value="ABX20457.1"/>
    <property type="molecule type" value="Genomic_DNA"/>
</dbReference>
<dbReference type="SMR" id="A9MJ57"/>
<dbReference type="STRING" id="41514.SARI_00531"/>
<dbReference type="KEGG" id="ses:SARI_00531"/>
<dbReference type="HOGENOM" id="CLU_014673_0_2_6"/>
<dbReference type="Proteomes" id="UP000002084">
    <property type="component" value="Chromosome"/>
</dbReference>
<dbReference type="GO" id="GO:0003723">
    <property type="term" value="F:RNA binding"/>
    <property type="evidence" value="ECO:0007669"/>
    <property type="project" value="InterPro"/>
</dbReference>
<dbReference type="GO" id="GO:0160147">
    <property type="term" value="F:tRNA pseudouridine(38-40) synthase activity"/>
    <property type="evidence" value="ECO:0007669"/>
    <property type="project" value="UniProtKB-EC"/>
</dbReference>
<dbReference type="GO" id="GO:0031119">
    <property type="term" value="P:tRNA pseudouridine synthesis"/>
    <property type="evidence" value="ECO:0007669"/>
    <property type="project" value="UniProtKB-UniRule"/>
</dbReference>
<dbReference type="CDD" id="cd02570">
    <property type="entry name" value="PseudoU_synth_EcTruA"/>
    <property type="match status" value="1"/>
</dbReference>
<dbReference type="FunFam" id="3.30.70.580:FF:000001">
    <property type="entry name" value="tRNA pseudouridine synthase A"/>
    <property type="match status" value="1"/>
</dbReference>
<dbReference type="FunFam" id="3.30.70.660:FF:000001">
    <property type="entry name" value="tRNA pseudouridine synthase A"/>
    <property type="match status" value="1"/>
</dbReference>
<dbReference type="Gene3D" id="3.30.70.660">
    <property type="entry name" value="Pseudouridine synthase I, catalytic domain, C-terminal subdomain"/>
    <property type="match status" value="1"/>
</dbReference>
<dbReference type="Gene3D" id="3.30.70.580">
    <property type="entry name" value="Pseudouridine synthase I, catalytic domain, N-terminal subdomain"/>
    <property type="match status" value="1"/>
</dbReference>
<dbReference type="HAMAP" id="MF_00171">
    <property type="entry name" value="TruA"/>
    <property type="match status" value="1"/>
</dbReference>
<dbReference type="InterPro" id="IPR020103">
    <property type="entry name" value="PsdUridine_synth_cat_dom_sf"/>
</dbReference>
<dbReference type="InterPro" id="IPR001406">
    <property type="entry name" value="PsdUridine_synth_TruA"/>
</dbReference>
<dbReference type="InterPro" id="IPR020097">
    <property type="entry name" value="PsdUridine_synth_TruA_a/b_dom"/>
</dbReference>
<dbReference type="InterPro" id="IPR020095">
    <property type="entry name" value="PsdUridine_synth_TruA_C"/>
</dbReference>
<dbReference type="InterPro" id="IPR020094">
    <property type="entry name" value="TruA/RsuA/RluB/E/F_N"/>
</dbReference>
<dbReference type="NCBIfam" id="TIGR00071">
    <property type="entry name" value="hisT_truA"/>
    <property type="match status" value="1"/>
</dbReference>
<dbReference type="PANTHER" id="PTHR11142">
    <property type="entry name" value="PSEUDOURIDYLATE SYNTHASE"/>
    <property type="match status" value="1"/>
</dbReference>
<dbReference type="PANTHER" id="PTHR11142:SF0">
    <property type="entry name" value="TRNA PSEUDOURIDINE SYNTHASE-LIKE 1"/>
    <property type="match status" value="1"/>
</dbReference>
<dbReference type="Pfam" id="PF01416">
    <property type="entry name" value="PseudoU_synth_1"/>
    <property type="match status" value="2"/>
</dbReference>
<dbReference type="PIRSF" id="PIRSF001430">
    <property type="entry name" value="tRNA_psdUrid_synth"/>
    <property type="match status" value="1"/>
</dbReference>
<dbReference type="SUPFAM" id="SSF55120">
    <property type="entry name" value="Pseudouridine synthase"/>
    <property type="match status" value="1"/>
</dbReference>
<proteinExistence type="inferred from homology"/>
<evidence type="ECO:0000255" key="1">
    <source>
        <dbReference type="HAMAP-Rule" id="MF_00171"/>
    </source>
</evidence>
<reference key="1">
    <citation type="submission" date="2007-11" db="EMBL/GenBank/DDBJ databases">
        <authorList>
            <consortium name="The Salmonella enterica serovar Arizonae Genome Sequencing Project"/>
            <person name="McClelland M."/>
            <person name="Sanderson E.K."/>
            <person name="Porwollik S."/>
            <person name="Spieth J."/>
            <person name="Clifton W.S."/>
            <person name="Fulton R."/>
            <person name="Chunyan W."/>
            <person name="Wollam A."/>
            <person name="Shah N."/>
            <person name="Pepin K."/>
            <person name="Bhonagiri V."/>
            <person name="Nash W."/>
            <person name="Johnson M."/>
            <person name="Thiruvilangam P."/>
            <person name="Wilson R."/>
        </authorList>
    </citation>
    <scope>NUCLEOTIDE SEQUENCE [LARGE SCALE GENOMIC DNA]</scope>
    <source>
        <strain>ATCC BAA-731 / CDC346-86 / RSK2980</strain>
    </source>
</reference>
<sequence>MSGQQSSPVYKIALGIEYDGSKYYGWQRQNEVRSVQEKLEKALSQVANEPINVFCAGRTDAGVHGTGQVVHFETTALRKDVAWTLGVNANLPGDIAVRWVKAVADDFHARFSATARRYRYIIYNHRLRPAVLAKGVTHYYKPLDAERMHRAAQCLIGENDFTSFRAVQCQSRTPWRNVMHISVTRHGPYVVVDIKANAFVHHMVRNIVGSLLEVGAHNQPESWIAELLAAKDRTLAAATAKAEGLYLVAVDYPDRFDLPKPPMGPLFLAD</sequence>
<organism>
    <name type="scientific">Salmonella arizonae (strain ATCC BAA-731 / CDC346-86 / RSK2980)</name>
    <dbReference type="NCBI Taxonomy" id="41514"/>
    <lineage>
        <taxon>Bacteria</taxon>
        <taxon>Pseudomonadati</taxon>
        <taxon>Pseudomonadota</taxon>
        <taxon>Gammaproteobacteria</taxon>
        <taxon>Enterobacterales</taxon>
        <taxon>Enterobacteriaceae</taxon>
        <taxon>Salmonella</taxon>
    </lineage>
</organism>
<comment type="function">
    <text evidence="1">Formation of pseudouridine at positions 38, 39 and 40 in the anticodon stem and loop of transfer RNAs.</text>
</comment>
<comment type="catalytic activity">
    <reaction evidence="1">
        <text>uridine(38/39/40) in tRNA = pseudouridine(38/39/40) in tRNA</text>
        <dbReference type="Rhea" id="RHEA:22376"/>
        <dbReference type="Rhea" id="RHEA-COMP:10085"/>
        <dbReference type="Rhea" id="RHEA-COMP:10087"/>
        <dbReference type="ChEBI" id="CHEBI:65314"/>
        <dbReference type="ChEBI" id="CHEBI:65315"/>
        <dbReference type="EC" id="5.4.99.12"/>
    </reaction>
</comment>
<comment type="subunit">
    <text evidence="1">Homodimer.</text>
</comment>
<comment type="similarity">
    <text evidence="1">Belongs to the tRNA pseudouridine synthase TruA family.</text>
</comment>
<keyword id="KW-0413">Isomerase</keyword>
<keyword id="KW-1185">Reference proteome</keyword>
<keyword id="KW-0819">tRNA processing</keyword>
<feature type="chain" id="PRO_1000077099" description="tRNA pseudouridine synthase A">
    <location>
        <begin position="1"/>
        <end position="270"/>
    </location>
</feature>
<feature type="active site" description="Nucleophile" evidence="1">
    <location>
        <position position="60"/>
    </location>
</feature>
<feature type="binding site" evidence="1">
    <location>
        <position position="118"/>
    </location>
    <ligand>
        <name>substrate</name>
    </ligand>
</feature>